<comment type="subcellular location">
    <subcellularLocation>
        <location evidence="1">Cytoplasm</location>
    </subcellularLocation>
    <subcellularLocation>
        <location evidence="1">Nucleus</location>
    </subcellularLocation>
</comment>
<accession>Q54DA8</accession>
<protein>
    <recommendedName>
        <fullName>Protein STIP1 homolog</fullName>
    </recommendedName>
</protein>
<gene>
    <name type="primary">sti1</name>
    <name type="synonym">stip1</name>
    <name type="ORF">DDB_G0292404</name>
</gene>
<keyword id="KW-0963">Cytoplasm</keyword>
<keyword id="KW-0539">Nucleus</keyword>
<keyword id="KW-1185">Reference proteome</keyword>
<keyword id="KW-0677">Repeat</keyword>
<keyword id="KW-0802">TPR repeat</keyword>
<organism>
    <name type="scientific">Dictyostelium discoideum</name>
    <name type="common">Social amoeba</name>
    <dbReference type="NCBI Taxonomy" id="44689"/>
    <lineage>
        <taxon>Eukaryota</taxon>
        <taxon>Amoebozoa</taxon>
        <taxon>Evosea</taxon>
        <taxon>Eumycetozoa</taxon>
        <taxon>Dictyostelia</taxon>
        <taxon>Dictyosteliales</taxon>
        <taxon>Dictyosteliaceae</taxon>
        <taxon>Dictyostelium</taxon>
    </lineage>
</organism>
<sequence length="564" mass="63210">MSENAQKATEFKNQGNAAFSSKDYNSAVKCFDQAIELDPSNHILYSNRSASLLALDKNEDALTDAKKAIELKPDWSKGYLRETNALYKLGRFEEAEKSAEAGLKIDPTNQQLEDALEDAQYATTGAKDPASAMANLFSAQNLTKLRFNPKTAPFFQQPDFVAIMDQISKNPSLFSQYIADQRFSTCLGVLLGVDINQGPGAPPQSQQPTPQQPTPTPQQPTPTPQQPKPTEAPKKPEAPPMTESQKERDLGNKAYAKKEFEQAIVHYDKAVELDSSDILAMNNKAAVLIEQQKLDEAIETCKKALEKAQEIRADYRVKSKVYTRLGNIYLKKNQLDDAYKAYSSAVLEDKNADTTANMKKIEKLKKQRDDEAYLSVDQSIIEKNKGVEHFKKGEFPEAIKCFEEAIRRNPKDHTIYSNRSAAYSKLLEYKLAIKDADKCIELEPTFIKGYIRKGTALFAMREYQQALEVYDQGLRIEANNPELLDLSRKTVAALTKLQSTLTDEERLQQAAKDPEIQKILSDPIMNQILKDMSENPAAAQDHLKNPLIMAKFQKLVNAGIVKLG</sequence>
<dbReference type="EMBL" id="AAFI02000190">
    <property type="protein sequence ID" value="EAL61181.1"/>
    <property type="molecule type" value="Genomic_DNA"/>
</dbReference>
<dbReference type="RefSeq" id="XP_629588.1">
    <property type="nucleotide sequence ID" value="XM_629586.1"/>
</dbReference>
<dbReference type="SMR" id="Q54DA8"/>
<dbReference type="FunCoup" id="Q54DA8">
    <property type="interactions" value="694"/>
</dbReference>
<dbReference type="STRING" id="44689.Q54DA8"/>
<dbReference type="GlyGen" id="Q54DA8">
    <property type="glycosylation" value="4 sites"/>
</dbReference>
<dbReference type="PaxDb" id="44689-DDB0237783"/>
<dbReference type="EnsemblProtists" id="EAL61181">
    <property type="protein sequence ID" value="EAL61181"/>
    <property type="gene ID" value="DDB_G0292404"/>
</dbReference>
<dbReference type="GeneID" id="8628648"/>
<dbReference type="KEGG" id="ddi:DDB_G0292404"/>
<dbReference type="dictyBase" id="DDB_G0292404">
    <property type="gene designation" value="sti1"/>
</dbReference>
<dbReference type="VEuPathDB" id="AmoebaDB:DDB_G0292404"/>
<dbReference type="eggNOG" id="KOG0548">
    <property type="taxonomic scope" value="Eukaryota"/>
</dbReference>
<dbReference type="HOGENOM" id="CLU_000134_46_5_1"/>
<dbReference type="InParanoid" id="Q54DA8"/>
<dbReference type="OMA" id="MYSAREN"/>
<dbReference type="PhylomeDB" id="Q54DA8"/>
<dbReference type="Reactome" id="R-DDI-3371497">
    <property type="pathway name" value="HSP90 chaperone cycle for steroid hormone receptors (SHR) in the presence of ligand"/>
</dbReference>
<dbReference type="PRO" id="PR:Q54DA8"/>
<dbReference type="Proteomes" id="UP000002195">
    <property type="component" value="Chromosome 6"/>
</dbReference>
<dbReference type="GO" id="GO:0005634">
    <property type="term" value="C:nucleus"/>
    <property type="evidence" value="ECO:0007669"/>
    <property type="project" value="UniProtKB-SubCell"/>
</dbReference>
<dbReference type="GO" id="GO:0045335">
    <property type="term" value="C:phagocytic vesicle"/>
    <property type="evidence" value="ECO:0007005"/>
    <property type="project" value="dictyBase"/>
</dbReference>
<dbReference type="GO" id="GO:0030544">
    <property type="term" value="F:Hsp70 protein binding"/>
    <property type="evidence" value="ECO:0000250"/>
    <property type="project" value="dictyBase"/>
</dbReference>
<dbReference type="GO" id="GO:0051879">
    <property type="term" value="F:Hsp90 protein binding"/>
    <property type="evidence" value="ECO:0000318"/>
    <property type="project" value="GO_Central"/>
</dbReference>
<dbReference type="GO" id="GO:0006457">
    <property type="term" value="P:protein folding"/>
    <property type="evidence" value="ECO:0000250"/>
    <property type="project" value="dictyBase"/>
</dbReference>
<dbReference type="FunFam" id="1.10.260.100:FF:000004">
    <property type="entry name" value="Putative stress-induced-phosphoprotein 1"/>
    <property type="match status" value="1"/>
</dbReference>
<dbReference type="FunFam" id="1.25.40.10:FF:000010">
    <property type="entry name" value="Stress-induced phosphoprotein 1"/>
    <property type="match status" value="1"/>
</dbReference>
<dbReference type="FunFam" id="1.25.40.10:FF:000020">
    <property type="entry name" value="Stress-induced phosphoprotein 1"/>
    <property type="match status" value="1"/>
</dbReference>
<dbReference type="FunFam" id="1.10.260.100:FF:000002">
    <property type="entry name" value="Stress-induced-phosphoprotein 1 (Hsp70/Hsp90-organizing)"/>
    <property type="match status" value="1"/>
</dbReference>
<dbReference type="FunFam" id="1.25.40.10:FF:000027">
    <property type="entry name" value="stress-induced-phosphoprotein 1 isoform X1"/>
    <property type="match status" value="1"/>
</dbReference>
<dbReference type="Gene3D" id="1.10.260.100">
    <property type="match status" value="2"/>
</dbReference>
<dbReference type="Gene3D" id="1.25.40.10">
    <property type="entry name" value="Tetratricopeptide repeat domain"/>
    <property type="match status" value="3"/>
</dbReference>
<dbReference type="InterPro" id="IPR041243">
    <property type="entry name" value="STI1/HOP_DP"/>
</dbReference>
<dbReference type="InterPro" id="IPR006636">
    <property type="entry name" value="STI1_HS-bd"/>
</dbReference>
<dbReference type="InterPro" id="IPR011990">
    <property type="entry name" value="TPR-like_helical_dom_sf"/>
</dbReference>
<dbReference type="InterPro" id="IPR019734">
    <property type="entry name" value="TPR_rpt"/>
</dbReference>
<dbReference type="PANTHER" id="PTHR22904:SF523">
    <property type="entry name" value="STRESS-INDUCED-PHOSPHOPROTEIN 1"/>
    <property type="match status" value="1"/>
</dbReference>
<dbReference type="PANTHER" id="PTHR22904">
    <property type="entry name" value="TPR REPEAT CONTAINING PROTEIN"/>
    <property type="match status" value="1"/>
</dbReference>
<dbReference type="Pfam" id="PF17830">
    <property type="entry name" value="STI1-HOP_DP"/>
    <property type="match status" value="2"/>
</dbReference>
<dbReference type="Pfam" id="PF00515">
    <property type="entry name" value="TPR_1"/>
    <property type="match status" value="2"/>
</dbReference>
<dbReference type="Pfam" id="PF13424">
    <property type="entry name" value="TPR_12"/>
    <property type="match status" value="1"/>
</dbReference>
<dbReference type="Pfam" id="PF13181">
    <property type="entry name" value="TPR_8"/>
    <property type="match status" value="3"/>
</dbReference>
<dbReference type="SMART" id="SM00727">
    <property type="entry name" value="STI1"/>
    <property type="match status" value="2"/>
</dbReference>
<dbReference type="SMART" id="SM00028">
    <property type="entry name" value="TPR"/>
    <property type="match status" value="9"/>
</dbReference>
<dbReference type="SUPFAM" id="SSF48452">
    <property type="entry name" value="TPR-like"/>
    <property type="match status" value="2"/>
</dbReference>
<dbReference type="PROSITE" id="PS50005">
    <property type="entry name" value="TPR"/>
    <property type="match status" value="9"/>
</dbReference>
<dbReference type="PROSITE" id="PS50293">
    <property type="entry name" value="TPR_REGION"/>
    <property type="match status" value="2"/>
</dbReference>
<evidence type="ECO:0000250" key="1"/>
<evidence type="ECO:0000256" key="2">
    <source>
        <dbReference type="SAM" id="MobiDB-lite"/>
    </source>
</evidence>
<feature type="chain" id="PRO_0000328061" description="Protein STIP1 homolog">
    <location>
        <begin position="1"/>
        <end position="564"/>
    </location>
</feature>
<feature type="repeat" description="TPR 1">
    <location>
        <begin position="8"/>
        <end position="41"/>
    </location>
</feature>
<feature type="repeat" description="TPR 2">
    <location>
        <begin position="43"/>
        <end position="75"/>
    </location>
</feature>
<feature type="repeat" description="TPR 3">
    <location>
        <begin position="76"/>
        <end position="109"/>
    </location>
</feature>
<feature type="domain" description="STI1 1">
    <location>
        <begin position="139"/>
        <end position="177"/>
    </location>
</feature>
<feature type="repeat" description="TPR 4">
    <location>
        <begin position="244"/>
        <end position="277"/>
    </location>
</feature>
<feature type="repeat" description="TPR 5">
    <location>
        <begin position="279"/>
        <end position="311"/>
    </location>
</feature>
<feature type="repeat" description="TPR 6">
    <location>
        <begin position="319"/>
        <end position="352"/>
    </location>
</feature>
<feature type="repeat" description="TPR 7">
    <location>
        <begin position="379"/>
        <end position="412"/>
    </location>
</feature>
<feature type="repeat" description="TPR 8">
    <location>
        <begin position="414"/>
        <end position="446"/>
    </location>
</feature>
<feature type="repeat" description="TPR 9">
    <location>
        <begin position="447"/>
        <end position="480"/>
    </location>
</feature>
<feature type="domain" description="STI1 2">
    <location>
        <begin position="513"/>
        <end position="552"/>
    </location>
</feature>
<feature type="region of interest" description="Disordered" evidence="2">
    <location>
        <begin position="197"/>
        <end position="249"/>
    </location>
</feature>
<feature type="compositionally biased region" description="Low complexity" evidence="2">
    <location>
        <begin position="197"/>
        <end position="209"/>
    </location>
</feature>
<feature type="compositionally biased region" description="Pro residues" evidence="2">
    <location>
        <begin position="210"/>
        <end position="227"/>
    </location>
</feature>
<name>STIP1_DICDI</name>
<reference key="1">
    <citation type="journal article" date="2005" name="Nature">
        <title>The genome of the social amoeba Dictyostelium discoideum.</title>
        <authorList>
            <person name="Eichinger L."/>
            <person name="Pachebat J.A."/>
            <person name="Gloeckner G."/>
            <person name="Rajandream M.A."/>
            <person name="Sucgang R."/>
            <person name="Berriman M."/>
            <person name="Song J."/>
            <person name="Olsen R."/>
            <person name="Szafranski K."/>
            <person name="Xu Q."/>
            <person name="Tunggal B."/>
            <person name="Kummerfeld S."/>
            <person name="Madera M."/>
            <person name="Konfortov B.A."/>
            <person name="Rivero F."/>
            <person name="Bankier A.T."/>
            <person name="Lehmann R."/>
            <person name="Hamlin N."/>
            <person name="Davies R."/>
            <person name="Gaudet P."/>
            <person name="Fey P."/>
            <person name="Pilcher K."/>
            <person name="Chen G."/>
            <person name="Saunders D."/>
            <person name="Sodergren E.J."/>
            <person name="Davis P."/>
            <person name="Kerhornou A."/>
            <person name="Nie X."/>
            <person name="Hall N."/>
            <person name="Anjard C."/>
            <person name="Hemphill L."/>
            <person name="Bason N."/>
            <person name="Farbrother P."/>
            <person name="Desany B."/>
            <person name="Just E."/>
            <person name="Morio T."/>
            <person name="Rost R."/>
            <person name="Churcher C.M."/>
            <person name="Cooper J."/>
            <person name="Haydock S."/>
            <person name="van Driessche N."/>
            <person name="Cronin A."/>
            <person name="Goodhead I."/>
            <person name="Muzny D.M."/>
            <person name="Mourier T."/>
            <person name="Pain A."/>
            <person name="Lu M."/>
            <person name="Harper D."/>
            <person name="Lindsay R."/>
            <person name="Hauser H."/>
            <person name="James K.D."/>
            <person name="Quiles M."/>
            <person name="Madan Babu M."/>
            <person name="Saito T."/>
            <person name="Buchrieser C."/>
            <person name="Wardroper A."/>
            <person name="Felder M."/>
            <person name="Thangavelu M."/>
            <person name="Johnson D."/>
            <person name="Knights A."/>
            <person name="Loulseged H."/>
            <person name="Mungall K.L."/>
            <person name="Oliver K."/>
            <person name="Price C."/>
            <person name="Quail M.A."/>
            <person name="Urushihara H."/>
            <person name="Hernandez J."/>
            <person name="Rabbinowitsch E."/>
            <person name="Steffen D."/>
            <person name="Sanders M."/>
            <person name="Ma J."/>
            <person name="Kohara Y."/>
            <person name="Sharp S."/>
            <person name="Simmonds M.N."/>
            <person name="Spiegler S."/>
            <person name="Tivey A."/>
            <person name="Sugano S."/>
            <person name="White B."/>
            <person name="Walker D."/>
            <person name="Woodward J.R."/>
            <person name="Winckler T."/>
            <person name="Tanaka Y."/>
            <person name="Shaulsky G."/>
            <person name="Schleicher M."/>
            <person name="Weinstock G.M."/>
            <person name="Rosenthal A."/>
            <person name="Cox E.C."/>
            <person name="Chisholm R.L."/>
            <person name="Gibbs R.A."/>
            <person name="Loomis W.F."/>
            <person name="Platzer M."/>
            <person name="Kay R.R."/>
            <person name="Williams J.G."/>
            <person name="Dear P.H."/>
            <person name="Noegel A.A."/>
            <person name="Barrell B.G."/>
            <person name="Kuspa A."/>
        </authorList>
    </citation>
    <scope>NUCLEOTIDE SEQUENCE [LARGE SCALE GENOMIC DNA]</scope>
    <source>
        <strain>AX4</strain>
    </source>
</reference>
<proteinExistence type="inferred from homology"/>